<organism>
    <name type="scientific">Xenopus laevis</name>
    <name type="common">African clawed frog</name>
    <dbReference type="NCBI Taxonomy" id="8355"/>
    <lineage>
        <taxon>Eukaryota</taxon>
        <taxon>Metazoa</taxon>
        <taxon>Chordata</taxon>
        <taxon>Craniata</taxon>
        <taxon>Vertebrata</taxon>
        <taxon>Euteleostomi</taxon>
        <taxon>Amphibia</taxon>
        <taxon>Batrachia</taxon>
        <taxon>Anura</taxon>
        <taxon>Pipoidea</taxon>
        <taxon>Pipidae</taxon>
        <taxon>Xenopodinae</taxon>
        <taxon>Xenopus</taxon>
        <taxon>Xenopus</taxon>
    </lineage>
</organism>
<accession>Q708W1</accession>
<keyword id="KW-0010">Activator</keyword>
<keyword id="KW-0970">Cilium biogenesis/degradation</keyword>
<keyword id="KW-0238">DNA-binding</keyword>
<keyword id="KW-0539">Nucleus</keyword>
<keyword id="KW-1185">Reference proteome</keyword>
<keyword id="KW-0804">Transcription</keyword>
<keyword id="KW-0805">Transcription regulation</keyword>
<reference evidence="7" key="1">
    <citation type="journal article" date="2004" name="Dev. Genes Evol.">
        <title>Isolation and developmental expression of Xenopus FoxJ1 and FoxK1.</title>
        <authorList>
            <person name="Pohl B.S."/>
            <person name="Knoechel W."/>
        </authorList>
    </citation>
    <scope>NUCLEOTIDE SEQUENCE [MRNA]</scope>
    <source>
        <tissue evidence="4">Tadpole</tissue>
    </source>
</reference>
<reference evidence="6" key="2">
    <citation type="journal article" date="2005" name="Gene">
        <title>Of fox and frogs: fox (fork head/winged helix) transcription factors in Xenopus development.</title>
        <authorList>
            <person name="Pohl B.S."/>
            <person name="Knoechel W."/>
        </authorList>
    </citation>
    <scope>REVIEW</scope>
</reference>
<sequence length="439" mass="49020">MFDLPTVAPLDMEDSWVTFQAEGDQGQDSFSSSVNLDDSLTSLQWLQEFSILNANVGKTPSSSGDSHGYRHLSGAPCSPLAADPACLGMPHTPGKPISSSTSRASHLGLQPMEEIDYKTNPHVKPPYSYATLICMAMQASKKTKITLSAIYKWITDNFCYFRHADPTWQNSIRHNLSLNKCFIKVPREKDEPGKGGFWKIDPQYADRLMNGAMKKRRLPPVQIHPAFASAQAAASSNGNRASAWQMSVNSESHKLLKEFEEITSEQSWNALGEHGWNAISDGKSHKRKQPLPKRMFKAPRLSSSPMLSQEEQTELGSLKGDFDWEVIFDSSINGVNFSAFEDLEVTPPLSPVSRSVDLTVHGKHIDCPQQWYPMGQDQAVAQNSLDFDETFLATSFLQHPWEENRNDYLSNSANIEQLFDLNDAFPAELNDWPALGSYI</sequence>
<comment type="function">
    <text evidence="1 5">Key transcription factor required for motile ciliogenesis. Activates genes essential for motile cilia formation and function.</text>
</comment>
<comment type="subcellular location">
    <subcellularLocation>
        <location evidence="2 6">Nucleus</location>
    </subcellularLocation>
</comment>
<comment type="similarity">
    <text evidence="6">Belongs to the FOXJ1 family.</text>
</comment>
<protein>
    <recommendedName>
        <fullName>Forkhead box protein J1-B</fullName>
        <shortName>FoxJ1-B</shortName>
        <shortName>FoxJ1b</shortName>
        <shortName>xFoxJ1'</shortName>
    </recommendedName>
</protein>
<dbReference type="EMBL" id="AJ609391">
    <property type="protein sequence ID" value="CAE76651.1"/>
    <property type="molecule type" value="mRNA"/>
</dbReference>
<dbReference type="RefSeq" id="NP_001083644.1">
    <property type="nucleotide sequence ID" value="NM_001090175.1"/>
</dbReference>
<dbReference type="SMR" id="Q708W1"/>
<dbReference type="GeneID" id="399038"/>
<dbReference type="KEGG" id="xla:399038"/>
<dbReference type="AGR" id="Xenbase:XB-GENE-856300"/>
<dbReference type="CTD" id="399038"/>
<dbReference type="Xenbase" id="XB-GENE-856300">
    <property type="gene designation" value="foxj1.L"/>
</dbReference>
<dbReference type="OrthoDB" id="5954824at2759"/>
<dbReference type="Proteomes" id="UP000186698">
    <property type="component" value="Chromosome 9_10L"/>
</dbReference>
<dbReference type="Bgee" id="399038">
    <property type="expression patterns" value="Expressed in neurula embryo and 6 other cell types or tissues"/>
</dbReference>
<dbReference type="GO" id="GO:0005930">
    <property type="term" value="C:axoneme"/>
    <property type="evidence" value="ECO:0000269"/>
    <property type="project" value="Xenbase"/>
</dbReference>
<dbReference type="GO" id="GO:0005634">
    <property type="term" value="C:nucleus"/>
    <property type="evidence" value="ECO:0000250"/>
    <property type="project" value="UniProtKB"/>
</dbReference>
<dbReference type="GO" id="GO:0003677">
    <property type="term" value="F:DNA binding"/>
    <property type="evidence" value="ECO:0000303"/>
    <property type="project" value="UniProtKB"/>
</dbReference>
<dbReference type="GO" id="GO:0003700">
    <property type="term" value="F:DNA-binding transcription factor activity"/>
    <property type="evidence" value="ECO:0000303"/>
    <property type="project" value="UniProtKB"/>
</dbReference>
<dbReference type="GO" id="GO:0000981">
    <property type="term" value="F:DNA-binding transcription factor activity, RNA polymerase II-specific"/>
    <property type="evidence" value="ECO:0000318"/>
    <property type="project" value="GO_Central"/>
</dbReference>
<dbReference type="GO" id="GO:0000978">
    <property type="term" value="F:RNA polymerase II cis-regulatory region sequence-specific DNA binding"/>
    <property type="evidence" value="ECO:0000318"/>
    <property type="project" value="GO_Central"/>
</dbReference>
<dbReference type="GO" id="GO:0097711">
    <property type="term" value="P:ciliary basal body-plasma membrane docking"/>
    <property type="evidence" value="ECO:0000303"/>
    <property type="project" value="Xenbase"/>
</dbReference>
<dbReference type="GO" id="GO:0060271">
    <property type="term" value="P:cilium assembly"/>
    <property type="evidence" value="ECO:0000250"/>
    <property type="project" value="UniProtKB"/>
</dbReference>
<dbReference type="GO" id="GO:0006355">
    <property type="term" value="P:regulation of DNA-templated transcription"/>
    <property type="evidence" value="ECO:0000315"/>
    <property type="project" value="Xenbase"/>
</dbReference>
<dbReference type="GO" id="GO:0006357">
    <property type="term" value="P:regulation of transcription by RNA polymerase II"/>
    <property type="evidence" value="ECO:0000318"/>
    <property type="project" value="GO_Central"/>
</dbReference>
<dbReference type="CDD" id="cd20023">
    <property type="entry name" value="FH_FOXJ1"/>
    <property type="match status" value="1"/>
</dbReference>
<dbReference type="FunFam" id="1.10.10.10:FF:000030">
    <property type="entry name" value="Forkhead box protein K2"/>
    <property type="match status" value="1"/>
</dbReference>
<dbReference type="Gene3D" id="1.10.10.10">
    <property type="entry name" value="Winged helix-like DNA-binding domain superfamily/Winged helix DNA-binding domain"/>
    <property type="match status" value="1"/>
</dbReference>
<dbReference type="InterPro" id="IPR047512">
    <property type="entry name" value="FH_FOXJ1"/>
</dbReference>
<dbReference type="InterPro" id="IPR001766">
    <property type="entry name" value="Fork_head_dom"/>
</dbReference>
<dbReference type="InterPro" id="IPR047513">
    <property type="entry name" value="FOXJ1"/>
</dbReference>
<dbReference type="InterPro" id="IPR018122">
    <property type="entry name" value="TF_fork_head_CS_1"/>
</dbReference>
<dbReference type="InterPro" id="IPR030456">
    <property type="entry name" value="TF_fork_head_CS_2"/>
</dbReference>
<dbReference type="InterPro" id="IPR036388">
    <property type="entry name" value="WH-like_DNA-bd_sf"/>
</dbReference>
<dbReference type="InterPro" id="IPR036390">
    <property type="entry name" value="WH_DNA-bd_sf"/>
</dbReference>
<dbReference type="PANTHER" id="PTHR46805">
    <property type="entry name" value="FORKHEAD BOX PROTEIN J1"/>
    <property type="match status" value="1"/>
</dbReference>
<dbReference type="PANTHER" id="PTHR46805:SF5">
    <property type="entry name" value="FORKHEAD BOX PROTEIN J1"/>
    <property type="match status" value="1"/>
</dbReference>
<dbReference type="Pfam" id="PF00250">
    <property type="entry name" value="Forkhead"/>
    <property type="match status" value="1"/>
</dbReference>
<dbReference type="PRINTS" id="PR00053">
    <property type="entry name" value="FORKHEAD"/>
</dbReference>
<dbReference type="SMART" id="SM00339">
    <property type="entry name" value="FH"/>
    <property type="match status" value="1"/>
</dbReference>
<dbReference type="SUPFAM" id="SSF46785">
    <property type="entry name" value="Winged helix' DNA-binding domain"/>
    <property type="match status" value="1"/>
</dbReference>
<dbReference type="PROSITE" id="PS00657">
    <property type="entry name" value="FORK_HEAD_1"/>
    <property type="match status" value="1"/>
</dbReference>
<dbReference type="PROSITE" id="PS00658">
    <property type="entry name" value="FORK_HEAD_2"/>
    <property type="match status" value="1"/>
</dbReference>
<dbReference type="PROSITE" id="PS50039">
    <property type="entry name" value="FORK_HEAD_3"/>
    <property type="match status" value="1"/>
</dbReference>
<proteinExistence type="evidence at transcript level"/>
<name>FXJ1B_XENLA</name>
<feature type="chain" id="PRO_0000250443" description="Forkhead box protein J1-B">
    <location>
        <begin position="1"/>
        <end position="439"/>
    </location>
</feature>
<feature type="DNA-binding region" description="Fork-head" evidence="2 3">
    <location>
        <begin position="124"/>
        <end position="218"/>
    </location>
</feature>
<evidence type="ECO:0000250" key="1">
    <source>
        <dbReference type="UniProtKB" id="Q708W2"/>
    </source>
</evidence>
<evidence type="ECO:0000255" key="2"/>
<evidence type="ECO:0000255" key="3">
    <source>
        <dbReference type="PROSITE-ProRule" id="PRU00089"/>
    </source>
</evidence>
<evidence type="ECO:0000269" key="4">
    <source>
    </source>
</evidence>
<evidence type="ECO:0000269" key="5">
    <source>
    </source>
</evidence>
<evidence type="ECO:0000305" key="6"/>
<evidence type="ECO:0000312" key="7">
    <source>
        <dbReference type="EMBL" id="CAE76651.1"/>
    </source>
</evidence>
<gene>
    <name type="primary">foxj1-b</name>
    <name evidence="7" type="synonym">foxj1'</name>
</gene>